<reference key="1">
    <citation type="journal article" date="2006" name="J. Bacteriol.">
        <title>Comparative genomic evidence for a close relationship between the dimorphic prosthecate bacteria Hyphomonas neptunium and Caulobacter crescentus.</title>
        <authorList>
            <person name="Badger J.H."/>
            <person name="Hoover T.R."/>
            <person name="Brun Y.V."/>
            <person name="Weiner R.M."/>
            <person name="Laub M.T."/>
            <person name="Alexandre G."/>
            <person name="Mrazek J."/>
            <person name="Ren Q."/>
            <person name="Paulsen I.T."/>
            <person name="Nelson K.E."/>
            <person name="Khouri H.M."/>
            <person name="Radune D."/>
            <person name="Sosa J."/>
            <person name="Dodson R.J."/>
            <person name="Sullivan S.A."/>
            <person name="Rosovitz M.J."/>
            <person name="Madupu R."/>
            <person name="Brinkac L.M."/>
            <person name="Durkin A.S."/>
            <person name="Daugherty S.C."/>
            <person name="Kothari S.P."/>
            <person name="Giglio M.G."/>
            <person name="Zhou L."/>
            <person name="Haft D.H."/>
            <person name="Selengut J.D."/>
            <person name="Davidsen T.M."/>
            <person name="Yang Q."/>
            <person name="Zafar N."/>
            <person name="Ward N.L."/>
        </authorList>
    </citation>
    <scope>NUCLEOTIDE SEQUENCE [LARGE SCALE GENOMIC DNA]</scope>
    <source>
        <strain>ATCC 15444</strain>
    </source>
</reference>
<name>KAD_HYPNA</name>
<accession>Q0BYD5</accession>
<organism>
    <name type="scientific">Hyphomonas neptunium (strain ATCC 15444)</name>
    <dbReference type="NCBI Taxonomy" id="228405"/>
    <lineage>
        <taxon>Bacteria</taxon>
        <taxon>Pseudomonadati</taxon>
        <taxon>Pseudomonadota</taxon>
        <taxon>Alphaproteobacteria</taxon>
        <taxon>Hyphomonadales</taxon>
        <taxon>Hyphomonadaceae</taxon>
        <taxon>Hyphomonas</taxon>
    </lineage>
</organism>
<feature type="chain" id="PRO_1000058842" description="Adenylate kinase">
    <location>
        <begin position="1"/>
        <end position="189"/>
    </location>
</feature>
<feature type="region of interest" description="NMP" evidence="1">
    <location>
        <begin position="30"/>
        <end position="59"/>
    </location>
</feature>
<feature type="region of interest" description="LID" evidence="1">
    <location>
        <begin position="126"/>
        <end position="136"/>
    </location>
</feature>
<feature type="binding site" evidence="1">
    <location>
        <begin position="10"/>
        <end position="15"/>
    </location>
    <ligand>
        <name>ATP</name>
        <dbReference type="ChEBI" id="CHEBI:30616"/>
    </ligand>
</feature>
<feature type="binding site" evidence="1">
    <location>
        <position position="31"/>
    </location>
    <ligand>
        <name>AMP</name>
        <dbReference type="ChEBI" id="CHEBI:456215"/>
    </ligand>
</feature>
<feature type="binding site" evidence="1">
    <location>
        <position position="36"/>
    </location>
    <ligand>
        <name>AMP</name>
        <dbReference type="ChEBI" id="CHEBI:456215"/>
    </ligand>
</feature>
<feature type="binding site" evidence="1">
    <location>
        <begin position="57"/>
        <end position="59"/>
    </location>
    <ligand>
        <name>AMP</name>
        <dbReference type="ChEBI" id="CHEBI:456215"/>
    </ligand>
</feature>
<feature type="binding site" evidence="1">
    <location>
        <begin position="85"/>
        <end position="88"/>
    </location>
    <ligand>
        <name>AMP</name>
        <dbReference type="ChEBI" id="CHEBI:456215"/>
    </ligand>
</feature>
<feature type="binding site" evidence="1">
    <location>
        <position position="92"/>
    </location>
    <ligand>
        <name>AMP</name>
        <dbReference type="ChEBI" id="CHEBI:456215"/>
    </ligand>
</feature>
<feature type="binding site" evidence="1">
    <location>
        <position position="127"/>
    </location>
    <ligand>
        <name>ATP</name>
        <dbReference type="ChEBI" id="CHEBI:30616"/>
    </ligand>
</feature>
<feature type="binding site" evidence="1">
    <location>
        <position position="133"/>
    </location>
    <ligand>
        <name>AMP</name>
        <dbReference type="ChEBI" id="CHEBI:456215"/>
    </ligand>
</feature>
<feature type="binding site" evidence="1">
    <location>
        <position position="144"/>
    </location>
    <ligand>
        <name>AMP</name>
        <dbReference type="ChEBI" id="CHEBI:456215"/>
    </ligand>
</feature>
<feature type="binding site" evidence="1">
    <location>
        <position position="172"/>
    </location>
    <ligand>
        <name>ATP</name>
        <dbReference type="ChEBI" id="CHEBI:30616"/>
    </ligand>
</feature>
<keyword id="KW-0067">ATP-binding</keyword>
<keyword id="KW-0963">Cytoplasm</keyword>
<keyword id="KW-0418">Kinase</keyword>
<keyword id="KW-0545">Nucleotide biosynthesis</keyword>
<keyword id="KW-0547">Nucleotide-binding</keyword>
<keyword id="KW-1185">Reference proteome</keyword>
<keyword id="KW-0808">Transferase</keyword>
<protein>
    <recommendedName>
        <fullName evidence="1">Adenylate kinase</fullName>
        <shortName evidence="1">AK</shortName>
        <ecNumber evidence="1">2.7.4.3</ecNumber>
    </recommendedName>
    <alternativeName>
        <fullName evidence="1">ATP-AMP transphosphorylase</fullName>
    </alternativeName>
    <alternativeName>
        <fullName evidence="1">ATP:AMP phosphotransferase</fullName>
    </alternativeName>
    <alternativeName>
        <fullName evidence="1">Adenylate monophosphate kinase</fullName>
    </alternativeName>
</protein>
<comment type="function">
    <text evidence="1">Catalyzes the reversible transfer of the terminal phosphate group between ATP and AMP. Plays an important role in cellular energy homeostasis and in adenine nucleotide metabolism.</text>
</comment>
<comment type="catalytic activity">
    <reaction evidence="1">
        <text>AMP + ATP = 2 ADP</text>
        <dbReference type="Rhea" id="RHEA:12973"/>
        <dbReference type="ChEBI" id="CHEBI:30616"/>
        <dbReference type="ChEBI" id="CHEBI:456215"/>
        <dbReference type="ChEBI" id="CHEBI:456216"/>
        <dbReference type="EC" id="2.7.4.3"/>
    </reaction>
</comment>
<comment type="pathway">
    <text evidence="1">Purine metabolism; AMP biosynthesis via salvage pathway; AMP from ADP: step 1/1.</text>
</comment>
<comment type="subunit">
    <text evidence="1">Monomer.</text>
</comment>
<comment type="subcellular location">
    <subcellularLocation>
        <location evidence="1">Cytoplasm</location>
    </subcellularLocation>
</comment>
<comment type="domain">
    <text evidence="1">Consists of three domains, a large central CORE domain and two small peripheral domains, NMPbind and LID, which undergo movements during catalysis. The LID domain closes over the site of phosphoryl transfer upon ATP binding. Assembling and dissambling the active center during each catalytic cycle provides an effective means to prevent ATP hydrolysis.</text>
</comment>
<comment type="similarity">
    <text evidence="1">Belongs to the adenylate kinase family.</text>
</comment>
<proteinExistence type="inferred from homology"/>
<gene>
    <name evidence="1" type="primary">adk</name>
    <name type="ordered locus">HNE_2830</name>
</gene>
<dbReference type="EC" id="2.7.4.3" evidence="1"/>
<dbReference type="EMBL" id="CP000158">
    <property type="protein sequence ID" value="ABI75926.1"/>
    <property type="molecule type" value="Genomic_DNA"/>
</dbReference>
<dbReference type="RefSeq" id="WP_011647805.1">
    <property type="nucleotide sequence ID" value="NC_008358.1"/>
</dbReference>
<dbReference type="SMR" id="Q0BYD5"/>
<dbReference type="STRING" id="228405.HNE_2830"/>
<dbReference type="KEGG" id="hne:HNE_2830"/>
<dbReference type="eggNOG" id="COG0563">
    <property type="taxonomic scope" value="Bacteria"/>
</dbReference>
<dbReference type="HOGENOM" id="CLU_032354_1_2_5"/>
<dbReference type="UniPathway" id="UPA00588">
    <property type="reaction ID" value="UER00649"/>
</dbReference>
<dbReference type="Proteomes" id="UP000001959">
    <property type="component" value="Chromosome"/>
</dbReference>
<dbReference type="GO" id="GO:0005737">
    <property type="term" value="C:cytoplasm"/>
    <property type="evidence" value="ECO:0007669"/>
    <property type="project" value="UniProtKB-SubCell"/>
</dbReference>
<dbReference type="GO" id="GO:0004017">
    <property type="term" value="F:adenylate kinase activity"/>
    <property type="evidence" value="ECO:0007669"/>
    <property type="project" value="UniProtKB-UniRule"/>
</dbReference>
<dbReference type="GO" id="GO:0005524">
    <property type="term" value="F:ATP binding"/>
    <property type="evidence" value="ECO:0007669"/>
    <property type="project" value="UniProtKB-UniRule"/>
</dbReference>
<dbReference type="GO" id="GO:0044209">
    <property type="term" value="P:AMP salvage"/>
    <property type="evidence" value="ECO:0007669"/>
    <property type="project" value="UniProtKB-UniRule"/>
</dbReference>
<dbReference type="CDD" id="cd01428">
    <property type="entry name" value="ADK"/>
    <property type="match status" value="1"/>
</dbReference>
<dbReference type="Gene3D" id="3.40.50.300">
    <property type="entry name" value="P-loop containing nucleotide triphosphate hydrolases"/>
    <property type="match status" value="1"/>
</dbReference>
<dbReference type="HAMAP" id="MF_00235">
    <property type="entry name" value="Adenylate_kinase_Adk"/>
    <property type="match status" value="1"/>
</dbReference>
<dbReference type="InterPro" id="IPR000850">
    <property type="entry name" value="Adenylat/UMP-CMP_kin"/>
</dbReference>
<dbReference type="InterPro" id="IPR033690">
    <property type="entry name" value="Adenylat_kinase_CS"/>
</dbReference>
<dbReference type="InterPro" id="IPR027417">
    <property type="entry name" value="P-loop_NTPase"/>
</dbReference>
<dbReference type="NCBIfam" id="NF001381">
    <property type="entry name" value="PRK00279.1-3"/>
    <property type="match status" value="1"/>
</dbReference>
<dbReference type="NCBIfam" id="NF011100">
    <property type="entry name" value="PRK14527.1"/>
    <property type="match status" value="1"/>
</dbReference>
<dbReference type="NCBIfam" id="NF011104">
    <property type="entry name" value="PRK14531.1"/>
    <property type="match status" value="1"/>
</dbReference>
<dbReference type="NCBIfam" id="NF011105">
    <property type="entry name" value="PRK14532.1"/>
    <property type="match status" value="1"/>
</dbReference>
<dbReference type="PANTHER" id="PTHR23359">
    <property type="entry name" value="NUCLEOTIDE KINASE"/>
    <property type="match status" value="1"/>
</dbReference>
<dbReference type="Pfam" id="PF00406">
    <property type="entry name" value="ADK"/>
    <property type="match status" value="1"/>
</dbReference>
<dbReference type="PRINTS" id="PR00094">
    <property type="entry name" value="ADENYLTKNASE"/>
</dbReference>
<dbReference type="SUPFAM" id="SSF52540">
    <property type="entry name" value="P-loop containing nucleoside triphosphate hydrolases"/>
    <property type="match status" value="1"/>
</dbReference>
<dbReference type="PROSITE" id="PS00113">
    <property type="entry name" value="ADENYLATE_KINASE"/>
    <property type="match status" value="1"/>
</dbReference>
<evidence type="ECO:0000255" key="1">
    <source>
        <dbReference type="HAMAP-Rule" id="MF_00235"/>
    </source>
</evidence>
<sequence>MNLILFGPPAAGKGTQAKRLVEQRGFVQLSTGDMLRAARASGSELGQRVAKIMDEGGLVSDEIVIALIEEQLTVQAGAPGFIFDGFPRTIGQAEALDSLLESRESKVDLVIRMIVDDTRLLERVTKRFEEQGRADDNPATFSRRLERYYEDTAPLVPMYAERGVLVEIDGMGSIEAVSAEIDAALKQSA</sequence>